<protein>
    <recommendedName>
        <fullName evidence="1">L-threonine 3-dehydrogenase</fullName>
        <shortName evidence="1">TDH</shortName>
        <ecNumber evidence="1">1.1.1.103</ecNumber>
    </recommendedName>
</protein>
<proteinExistence type="inferred from homology"/>
<organism>
    <name type="scientific">Shewanella woodyi (strain ATCC 51908 / MS32)</name>
    <dbReference type="NCBI Taxonomy" id="392500"/>
    <lineage>
        <taxon>Bacteria</taxon>
        <taxon>Pseudomonadati</taxon>
        <taxon>Pseudomonadota</taxon>
        <taxon>Gammaproteobacteria</taxon>
        <taxon>Alteromonadales</taxon>
        <taxon>Shewanellaceae</taxon>
        <taxon>Shewanella</taxon>
    </lineage>
</organism>
<feature type="chain" id="PRO_1000130566" description="L-threonine 3-dehydrogenase">
    <location>
        <begin position="1"/>
        <end position="341"/>
    </location>
</feature>
<feature type="active site" description="Charge relay system" evidence="1">
    <location>
        <position position="40"/>
    </location>
</feature>
<feature type="active site" description="Charge relay system" evidence="1">
    <location>
        <position position="43"/>
    </location>
</feature>
<feature type="binding site" evidence="1">
    <location>
        <position position="38"/>
    </location>
    <ligand>
        <name>Zn(2+)</name>
        <dbReference type="ChEBI" id="CHEBI:29105"/>
        <label>1</label>
        <note>catalytic</note>
    </ligand>
</feature>
<feature type="binding site" evidence="1">
    <location>
        <position position="63"/>
    </location>
    <ligand>
        <name>Zn(2+)</name>
        <dbReference type="ChEBI" id="CHEBI:29105"/>
        <label>1</label>
        <note>catalytic</note>
    </ligand>
</feature>
<feature type="binding site" evidence="1">
    <location>
        <position position="64"/>
    </location>
    <ligand>
        <name>Zn(2+)</name>
        <dbReference type="ChEBI" id="CHEBI:29105"/>
        <label>1</label>
        <note>catalytic</note>
    </ligand>
</feature>
<feature type="binding site" evidence="1">
    <location>
        <position position="93"/>
    </location>
    <ligand>
        <name>Zn(2+)</name>
        <dbReference type="ChEBI" id="CHEBI:29105"/>
        <label>2</label>
    </ligand>
</feature>
<feature type="binding site" evidence="1">
    <location>
        <position position="96"/>
    </location>
    <ligand>
        <name>Zn(2+)</name>
        <dbReference type="ChEBI" id="CHEBI:29105"/>
        <label>2</label>
    </ligand>
</feature>
<feature type="binding site" evidence="1">
    <location>
        <position position="99"/>
    </location>
    <ligand>
        <name>Zn(2+)</name>
        <dbReference type="ChEBI" id="CHEBI:29105"/>
        <label>2</label>
    </ligand>
</feature>
<feature type="binding site" evidence="1">
    <location>
        <position position="107"/>
    </location>
    <ligand>
        <name>Zn(2+)</name>
        <dbReference type="ChEBI" id="CHEBI:29105"/>
        <label>2</label>
    </ligand>
</feature>
<feature type="binding site" evidence="1">
    <location>
        <position position="175"/>
    </location>
    <ligand>
        <name>NAD(+)</name>
        <dbReference type="ChEBI" id="CHEBI:57540"/>
    </ligand>
</feature>
<feature type="binding site" evidence="1">
    <location>
        <position position="195"/>
    </location>
    <ligand>
        <name>NAD(+)</name>
        <dbReference type="ChEBI" id="CHEBI:57540"/>
    </ligand>
</feature>
<feature type="binding site" evidence="1">
    <location>
        <position position="200"/>
    </location>
    <ligand>
        <name>NAD(+)</name>
        <dbReference type="ChEBI" id="CHEBI:57540"/>
    </ligand>
</feature>
<feature type="binding site" evidence="1">
    <location>
        <begin position="262"/>
        <end position="264"/>
    </location>
    <ligand>
        <name>NAD(+)</name>
        <dbReference type="ChEBI" id="CHEBI:57540"/>
    </ligand>
</feature>
<feature type="binding site" evidence="1">
    <location>
        <begin position="286"/>
        <end position="287"/>
    </location>
    <ligand>
        <name>NAD(+)</name>
        <dbReference type="ChEBI" id="CHEBI:57540"/>
    </ligand>
</feature>
<feature type="site" description="Important for catalytic activity for the proton relay mechanism but does not participate directly in the coordination of zinc atom" evidence="1">
    <location>
        <position position="148"/>
    </location>
</feature>
<reference key="1">
    <citation type="submission" date="2008-02" db="EMBL/GenBank/DDBJ databases">
        <title>Complete sequence of Shewanella woodyi ATCC 51908.</title>
        <authorList>
            <consortium name="US DOE Joint Genome Institute"/>
            <person name="Copeland A."/>
            <person name="Lucas S."/>
            <person name="Lapidus A."/>
            <person name="Glavina del Rio T."/>
            <person name="Dalin E."/>
            <person name="Tice H."/>
            <person name="Bruce D."/>
            <person name="Goodwin L."/>
            <person name="Pitluck S."/>
            <person name="Sims D."/>
            <person name="Brettin T."/>
            <person name="Detter J.C."/>
            <person name="Han C."/>
            <person name="Kuske C.R."/>
            <person name="Schmutz J."/>
            <person name="Larimer F."/>
            <person name="Land M."/>
            <person name="Hauser L."/>
            <person name="Kyrpides N."/>
            <person name="Lykidis A."/>
            <person name="Zhao J.-S."/>
            <person name="Richardson P."/>
        </authorList>
    </citation>
    <scope>NUCLEOTIDE SEQUENCE [LARGE SCALE GENOMIC DNA]</scope>
    <source>
        <strain>ATCC 51908 / MS32</strain>
    </source>
</reference>
<accession>B1KL24</accession>
<dbReference type="EC" id="1.1.1.103" evidence="1"/>
<dbReference type="EMBL" id="CP000961">
    <property type="protein sequence ID" value="ACA84365.1"/>
    <property type="molecule type" value="Genomic_DNA"/>
</dbReference>
<dbReference type="RefSeq" id="WP_012322714.1">
    <property type="nucleotide sequence ID" value="NC_010506.1"/>
</dbReference>
<dbReference type="SMR" id="B1KL24"/>
<dbReference type="STRING" id="392500.Swoo_0064"/>
<dbReference type="KEGG" id="swd:Swoo_0064"/>
<dbReference type="eggNOG" id="COG1063">
    <property type="taxonomic scope" value="Bacteria"/>
</dbReference>
<dbReference type="HOGENOM" id="CLU_026673_11_0_6"/>
<dbReference type="UniPathway" id="UPA00046">
    <property type="reaction ID" value="UER00505"/>
</dbReference>
<dbReference type="Proteomes" id="UP000002168">
    <property type="component" value="Chromosome"/>
</dbReference>
<dbReference type="GO" id="GO:0005737">
    <property type="term" value="C:cytoplasm"/>
    <property type="evidence" value="ECO:0007669"/>
    <property type="project" value="UniProtKB-SubCell"/>
</dbReference>
<dbReference type="GO" id="GO:0008743">
    <property type="term" value="F:L-threonine 3-dehydrogenase activity"/>
    <property type="evidence" value="ECO:0007669"/>
    <property type="project" value="UniProtKB-UniRule"/>
</dbReference>
<dbReference type="GO" id="GO:0008270">
    <property type="term" value="F:zinc ion binding"/>
    <property type="evidence" value="ECO:0007669"/>
    <property type="project" value="UniProtKB-UniRule"/>
</dbReference>
<dbReference type="GO" id="GO:0019518">
    <property type="term" value="P:L-threonine catabolic process to glycine"/>
    <property type="evidence" value="ECO:0007669"/>
    <property type="project" value="UniProtKB-UniPathway"/>
</dbReference>
<dbReference type="Gene3D" id="3.90.180.10">
    <property type="entry name" value="Medium-chain alcohol dehydrogenases, catalytic domain"/>
    <property type="match status" value="1"/>
</dbReference>
<dbReference type="Gene3D" id="3.40.50.720">
    <property type="entry name" value="NAD(P)-binding Rossmann-like Domain"/>
    <property type="match status" value="1"/>
</dbReference>
<dbReference type="HAMAP" id="MF_00627">
    <property type="entry name" value="Thr_dehydrog"/>
    <property type="match status" value="1"/>
</dbReference>
<dbReference type="InterPro" id="IPR013149">
    <property type="entry name" value="ADH-like_C"/>
</dbReference>
<dbReference type="InterPro" id="IPR013154">
    <property type="entry name" value="ADH-like_N"/>
</dbReference>
<dbReference type="InterPro" id="IPR002328">
    <property type="entry name" value="ADH_Zn_CS"/>
</dbReference>
<dbReference type="InterPro" id="IPR011032">
    <property type="entry name" value="GroES-like_sf"/>
</dbReference>
<dbReference type="InterPro" id="IPR004627">
    <property type="entry name" value="L-Threonine_3-DHase"/>
</dbReference>
<dbReference type="InterPro" id="IPR036291">
    <property type="entry name" value="NAD(P)-bd_dom_sf"/>
</dbReference>
<dbReference type="InterPro" id="IPR020843">
    <property type="entry name" value="PKS_ER"/>
</dbReference>
<dbReference type="InterPro" id="IPR050129">
    <property type="entry name" value="Zn_alcohol_dh"/>
</dbReference>
<dbReference type="NCBIfam" id="NF003808">
    <property type="entry name" value="PRK05396.1"/>
    <property type="match status" value="1"/>
</dbReference>
<dbReference type="NCBIfam" id="TIGR00692">
    <property type="entry name" value="tdh"/>
    <property type="match status" value="1"/>
</dbReference>
<dbReference type="PANTHER" id="PTHR43401">
    <property type="entry name" value="L-THREONINE 3-DEHYDROGENASE"/>
    <property type="match status" value="1"/>
</dbReference>
<dbReference type="PANTHER" id="PTHR43401:SF2">
    <property type="entry name" value="L-THREONINE 3-DEHYDROGENASE"/>
    <property type="match status" value="1"/>
</dbReference>
<dbReference type="Pfam" id="PF08240">
    <property type="entry name" value="ADH_N"/>
    <property type="match status" value="1"/>
</dbReference>
<dbReference type="Pfam" id="PF00107">
    <property type="entry name" value="ADH_zinc_N"/>
    <property type="match status" value="1"/>
</dbReference>
<dbReference type="SMART" id="SM00829">
    <property type="entry name" value="PKS_ER"/>
    <property type="match status" value="1"/>
</dbReference>
<dbReference type="SUPFAM" id="SSF50129">
    <property type="entry name" value="GroES-like"/>
    <property type="match status" value="1"/>
</dbReference>
<dbReference type="SUPFAM" id="SSF51735">
    <property type="entry name" value="NAD(P)-binding Rossmann-fold domains"/>
    <property type="match status" value="1"/>
</dbReference>
<dbReference type="PROSITE" id="PS00059">
    <property type="entry name" value="ADH_ZINC"/>
    <property type="match status" value="1"/>
</dbReference>
<gene>
    <name evidence="1" type="primary">tdh</name>
    <name type="ordered locus">Swoo_0064</name>
</gene>
<evidence type="ECO:0000255" key="1">
    <source>
        <dbReference type="HAMAP-Rule" id="MF_00627"/>
    </source>
</evidence>
<comment type="function">
    <text evidence="1">Catalyzes the NAD(+)-dependent oxidation of L-threonine to 2-amino-3-ketobutyrate.</text>
</comment>
<comment type="catalytic activity">
    <reaction evidence="1">
        <text>L-threonine + NAD(+) = (2S)-2-amino-3-oxobutanoate + NADH + H(+)</text>
        <dbReference type="Rhea" id="RHEA:13161"/>
        <dbReference type="ChEBI" id="CHEBI:15378"/>
        <dbReference type="ChEBI" id="CHEBI:57540"/>
        <dbReference type="ChEBI" id="CHEBI:57926"/>
        <dbReference type="ChEBI" id="CHEBI:57945"/>
        <dbReference type="ChEBI" id="CHEBI:78948"/>
        <dbReference type="EC" id="1.1.1.103"/>
    </reaction>
</comment>
<comment type="cofactor">
    <cofactor evidence="1">
        <name>Zn(2+)</name>
        <dbReference type="ChEBI" id="CHEBI:29105"/>
    </cofactor>
    <text evidence="1">Binds 2 Zn(2+) ions per subunit.</text>
</comment>
<comment type="pathway">
    <text evidence="1">Amino-acid degradation; L-threonine degradation via oxydo-reductase pathway; glycine from L-threonine: step 1/2.</text>
</comment>
<comment type="subunit">
    <text evidence="1">Homotetramer.</text>
</comment>
<comment type="subcellular location">
    <subcellularLocation>
        <location evidence="1">Cytoplasm</location>
    </subcellularLocation>
</comment>
<comment type="similarity">
    <text evidence="1">Belongs to the zinc-containing alcohol dehydrogenase family.</text>
</comment>
<sequence length="341" mass="37266">MKALSKLKPEEGIWMVDAPKPEMGHNDLLIKIRKTAICGTDVHIYNWDEWSQNTIPVPMVVGHEYVGEVVDIGQEVRGFSIGDRVSGEGHITCGHCRNCRAGRTHLCRNTSGVGVNRDGAFAEYLVIPAFNAFKIPDDISDDLASIFDPFGNAVHTALSFDLVGEDVLITGAGPIGIMAAAVCRHVGARHVVITDVNEYRLELAQKMGATRAVNVAKEDLKDVMSELGMTEGFDVGLEMSGVPSAFHSMLDTMNHGGKVAMLGIPGGDMAIDWSKVIFKGLIIKGIYGREMFETWYKMASLIQSGLDISPIITHHYKVDEFQQGFDAMRSGQSGKVILNWD</sequence>
<name>TDH_SHEWM</name>
<keyword id="KW-0963">Cytoplasm</keyword>
<keyword id="KW-0479">Metal-binding</keyword>
<keyword id="KW-0520">NAD</keyword>
<keyword id="KW-0560">Oxidoreductase</keyword>
<keyword id="KW-1185">Reference proteome</keyword>
<keyword id="KW-0862">Zinc</keyword>